<feature type="chain" id="PRO_1000130377" description="Protein FdhE homolog">
    <location>
        <begin position="1"/>
        <end position="309"/>
    </location>
</feature>
<accession>B1JH25</accession>
<comment type="function">
    <text evidence="1">Necessary for formate dehydrogenase activity.</text>
</comment>
<comment type="subcellular location">
    <subcellularLocation>
        <location evidence="1">Cytoplasm</location>
    </subcellularLocation>
</comment>
<comment type="similarity">
    <text evidence="1">Belongs to the FdhE family.</text>
</comment>
<evidence type="ECO:0000255" key="1">
    <source>
        <dbReference type="HAMAP-Rule" id="MF_00611"/>
    </source>
</evidence>
<name>FDHE_YERPY</name>
<protein>
    <recommendedName>
        <fullName evidence="1">Protein FdhE homolog</fullName>
    </recommendedName>
</protein>
<dbReference type="EMBL" id="CP000950">
    <property type="protein sequence ID" value="ACA66355.1"/>
    <property type="molecule type" value="Genomic_DNA"/>
</dbReference>
<dbReference type="RefSeq" id="WP_002209609.1">
    <property type="nucleotide sequence ID" value="NZ_CP009792.1"/>
</dbReference>
<dbReference type="SMR" id="B1JH25"/>
<dbReference type="GeneID" id="57974659"/>
<dbReference type="KEGG" id="ypy:YPK_0041"/>
<dbReference type="PATRIC" id="fig|502800.11.peg.642"/>
<dbReference type="GO" id="GO:0005829">
    <property type="term" value="C:cytosol"/>
    <property type="evidence" value="ECO:0007669"/>
    <property type="project" value="TreeGrafter"/>
</dbReference>
<dbReference type="GO" id="GO:0008199">
    <property type="term" value="F:ferric iron binding"/>
    <property type="evidence" value="ECO:0007669"/>
    <property type="project" value="TreeGrafter"/>
</dbReference>
<dbReference type="GO" id="GO:0051604">
    <property type="term" value="P:protein maturation"/>
    <property type="evidence" value="ECO:0007669"/>
    <property type="project" value="TreeGrafter"/>
</dbReference>
<dbReference type="CDD" id="cd16341">
    <property type="entry name" value="FdhE"/>
    <property type="match status" value="1"/>
</dbReference>
<dbReference type="FunFam" id="3.90.1670.10:FF:000001">
    <property type="entry name" value="Protein FdhE"/>
    <property type="match status" value="1"/>
</dbReference>
<dbReference type="Gene3D" id="3.90.1670.10">
    <property type="entry name" value="FdhE-like domain"/>
    <property type="match status" value="1"/>
</dbReference>
<dbReference type="HAMAP" id="MF_00611">
    <property type="entry name" value="FdeH"/>
    <property type="match status" value="1"/>
</dbReference>
<dbReference type="InterPro" id="IPR024064">
    <property type="entry name" value="FdhE-like_sf"/>
</dbReference>
<dbReference type="InterPro" id="IPR056796">
    <property type="entry name" value="FdhE_C"/>
</dbReference>
<dbReference type="InterPro" id="IPR056797">
    <property type="entry name" value="FdhE_central"/>
</dbReference>
<dbReference type="InterPro" id="IPR056774">
    <property type="entry name" value="FdhE_N"/>
</dbReference>
<dbReference type="InterPro" id="IPR006452">
    <property type="entry name" value="Formate_DH_accessory"/>
</dbReference>
<dbReference type="NCBIfam" id="TIGR01562">
    <property type="entry name" value="FdhE"/>
    <property type="match status" value="1"/>
</dbReference>
<dbReference type="NCBIfam" id="NF002925">
    <property type="entry name" value="PRK03564.1"/>
    <property type="match status" value="1"/>
</dbReference>
<dbReference type="PANTHER" id="PTHR37689">
    <property type="entry name" value="PROTEIN FDHE"/>
    <property type="match status" value="1"/>
</dbReference>
<dbReference type="PANTHER" id="PTHR37689:SF1">
    <property type="entry name" value="PROTEIN FDHE"/>
    <property type="match status" value="1"/>
</dbReference>
<dbReference type="Pfam" id="PF24860">
    <property type="entry name" value="FdhE_C"/>
    <property type="match status" value="1"/>
</dbReference>
<dbReference type="Pfam" id="PF24859">
    <property type="entry name" value="FdhE_central"/>
    <property type="match status" value="1"/>
</dbReference>
<dbReference type="Pfam" id="PF04216">
    <property type="entry name" value="FdhE_N"/>
    <property type="match status" value="1"/>
</dbReference>
<dbReference type="PIRSF" id="PIRSF018296">
    <property type="entry name" value="Format_dh_formtn"/>
    <property type="match status" value="1"/>
</dbReference>
<dbReference type="SUPFAM" id="SSF144020">
    <property type="entry name" value="FdhE-like"/>
    <property type="match status" value="1"/>
</dbReference>
<sequence>MSIRIVPKDQLGKQREKGTTAGNIPPLLFANLKSLYTRRTERLQQLALDNPLADYLDFAAKITEAQQKALHDHPLVLDMQAELVQSAASGKPPLDGSVFPRTEHWRKLLSALIAELRHDAPDHILAVLDNLDKASVHELELYADALLNRDFSQVGSEKAPFIWAALSLYWAQMASQIPGKARAEYGEHRQFCPVCGSIPVSSVVHIGTHNGLRYLHCNLCESEWHVVRIKCSNCEQTRDLNYWSLDSELAAVKAESCGDCGTYLKILYQEKDPQVEAVADDLASLILDAKMEGEGFARSSINPFLFPGE</sequence>
<proteinExistence type="inferred from homology"/>
<organism>
    <name type="scientific">Yersinia pseudotuberculosis serotype O:3 (strain YPIII)</name>
    <dbReference type="NCBI Taxonomy" id="502800"/>
    <lineage>
        <taxon>Bacteria</taxon>
        <taxon>Pseudomonadati</taxon>
        <taxon>Pseudomonadota</taxon>
        <taxon>Gammaproteobacteria</taxon>
        <taxon>Enterobacterales</taxon>
        <taxon>Yersiniaceae</taxon>
        <taxon>Yersinia</taxon>
    </lineage>
</organism>
<gene>
    <name evidence="1" type="primary">fdhE</name>
    <name type="ordered locus">YPK_0041</name>
</gene>
<reference key="1">
    <citation type="submission" date="2008-02" db="EMBL/GenBank/DDBJ databases">
        <title>Complete sequence of Yersinia pseudotuberculosis YPIII.</title>
        <authorList>
            <consortium name="US DOE Joint Genome Institute"/>
            <person name="Copeland A."/>
            <person name="Lucas S."/>
            <person name="Lapidus A."/>
            <person name="Glavina del Rio T."/>
            <person name="Dalin E."/>
            <person name="Tice H."/>
            <person name="Bruce D."/>
            <person name="Goodwin L."/>
            <person name="Pitluck S."/>
            <person name="Munk A.C."/>
            <person name="Brettin T."/>
            <person name="Detter J.C."/>
            <person name="Han C."/>
            <person name="Tapia R."/>
            <person name="Schmutz J."/>
            <person name="Larimer F."/>
            <person name="Land M."/>
            <person name="Hauser L."/>
            <person name="Challacombe J.F."/>
            <person name="Green L."/>
            <person name="Lindler L.E."/>
            <person name="Nikolich M.P."/>
            <person name="Richardson P."/>
        </authorList>
    </citation>
    <scope>NUCLEOTIDE SEQUENCE [LARGE SCALE GENOMIC DNA]</scope>
    <source>
        <strain>YPIII</strain>
    </source>
</reference>
<keyword id="KW-0963">Cytoplasm</keyword>